<comment type="function">
    <text>Catalyzes the oxidation of mono- and o-diphenols to o-diquinones.</text>
</comment>
<comment type="catalytic activity">
    <reaction>
        <text>2 catechol + O2 = 2 1,2-benzoquinone + 2 H2O</text>
        <dbReference type="Rhea" id="RHEA:21632"/>
        <dbReference type="ChEBI" id="CHEBI:15377"/>
        <dbReference type="ChEBI" id="CHEBI:15379"/>
        <dbReference type="ChEBI" id="CHEBI:17253"/>
        <dbReference type="ChEBI" id="CHEBI:18135"/>
        <dbReference type="EC" id="1.10.3.1"/>
    </reaction>
</comment>
<comment type="cofactor">
    <cofactor evidence="2">
        <name>Cu(2+)</name>
        <dbReference type="ChEBI" id="CHEBI:29036"/>
    </cofactor>
    <text evidence="2">Binds 2 copper ions per subunit.</text>
</comment>
<comment type="subcellular location">
    <subcellularLocation>
        <location>Plastid</location>
        <location>Chloroplast thylakoid lumen</location>
    </subcellularLocation>
</comment>
<comment type="similarity">
    <text evidence="3">Belongs to the tyrosinase family.</text>
</comment>
<protein>
    <recommendedName>
        <fullName>Polyphenol oxidase D, chloroplastic</fullName>
        <shortName>PPO</shortName>
        <ecNumber>1.10.3.1</ecNumber>
    </recommendedName>
    <alternativeName>
        <fullName>Catechol oxidase</fullName>
    </alternativeName>
</protein>
<organism>
    <name type="scientific">Solanum lycopersicum</name>
    <name type="common">Tomato</name>
    <name type="synonym">Lycopersicon esculentum</name>
    <dbReference type="NCBI Taxonomy" id="4081"/>
    <lineage>
        <taxon>Eukaryota</taxon>
        <taxon>Viridiplantae</taxon>
        <taxon>Streptophyta</taxon>
        <taxon>Embryophyta</taxon>
        <taxon>Tracheophyta</taxon>
        <taxon>Spermatophyta</taxon>
        <taxon>Magnoliopsida</taxon>
        <taxon>eudicotyledons</taxon>
        <taxon>Gunneridae</taxon>
        <taxon>Pentapetalae</taxon>
        <taxon>asterids</taxon>
        <taxon>lamiids</taxon>
        <taxon>Solanales</taxon>
        <taxon>Solanaceae</taxon>
        <taxon>Solanoideae</taxon>
        <taxon>Solaneae</taxon>
        <taxon>Solanum</taxon>
        <taxon>Solanum subgen. Lycopersicon</taxon>
    </lineage>
</organism>
<name>PPOD_SOLLC</name>
<accession>Q08306</accession>
<proteinExistence type="inferred from homology"/>
<keyword id="KW-0150">Chloroplast</keyword>
<keyword id="KW-0186">Copper</keyword>
<keyword id="KW-1015">Disulfide bond</keyword>
<keyword id="KW-0479">Metal-binding</keyword>
<keyword id="KW-0560">Oxidoreductase</keyword>
<keyword id="KW-0934">Plastid</keyword>
<keyword id="KW-1185">Reference proteome</keyword>
<keyword id="KW-0883">Thioether bond</keyword>
<keyword id="KW-0793">Thylakoid</keyword>
<keyword id="KW-0809">Transit peptide</keyword>
<sequence>MASLCSNSSTTSLKTPFTSLGSTPKPCQLFLHGKRNKAFKVSCKVTNTNGNQDETNSVDRRNVLLGLGGLYGVANAIPLAASAAPTPPPDLSSCSIARIDENQVVSYSCCAPKPDDMEKVPYYKFPSMTKLRVRQPAHEADEEYIAKYNVSVTKMRDLDKTQPLNPIGFKQQANIHCAYCNGAYRIGGKELQVHNSWLFFPFHRWYLYFYESNAGKLIDDPTFALPYWNWDHPKGMRFPAMYDREGTFLFDETRDQSHRNGTVIDLGFFGNEVETTQLQMMSNNLTLMYRQMVTNAPCPRMFFGDLMISGITLNSPGTIENIPHGPVHIWSGTVRGSTLPNGAISKRGEYGHFYSAGLDPVFFCHHSNVDRMWSEWKATGGKRTDITHKDWLNSEFFFYDENENPYRVKVRDCLDTKKMGYDYKPMRTPWRNFKPLTKASAGKVNTSSIPPVSQAFPLAKLDKAVSFSINRPTSSRTPQEKNAQEEMLTFNSIRYDNRGYIRFDVFLNVDNNVNANELDKAEFAGSYTSLPHVHRAGETNHIATVDFQLAITELLEDIGLEDEDTIAVTLVPKRGGEGISIENATISLADC</sequence>
<feature type="transit peptide" description="Chloroplast" evidence="1">
    <location>
        <begin position="1"/>
        <end position="83"/>
    </location>
</feature>
<feature type="chain" id="PRO_0000035913" description="Polyphenol oxidase D, chloroplastic">
    <location>
        <begin position="84"/>
        <end position="591"/>
    </location>
</feature>
<feature type="binding site" evidence="2">
    <location>
        <position position="176"/>
    </location>
    <ligand>
        <name>Cu cation</name>
        <dbReference type="ChEBI" id="CHEBI:23378"/>
        <label>A</label>
    </ligand>
</feature>
<feature type="binding site" evidence="2">
    <location>
        <position position="194"/>
    </location>
    <ligand>
        <name>Cu cation</name>
        <dbReference type="ChEBI" id="CHEBI:23378"/>
        <label>A</label>
    </ligand>
</feature>
<feature type="binding site" evidence="2">
    <location>
        <position position="203"/>
    </location>
    <ligand>
        <name>Cu cation</name>
        <dbReference type="ChEBI" id="CHEBI:23378"/>
        <label>A</label>
    </ligand>
</feature>
<feature type="binding site" evidence="2">
    <location>
        <position position="324"/>
    </location>
    <ligand>
        <name>Cu cation</name>
        <dbReference type="ChEBI" id="CHEBI:23378"/>
        <label>B</label>
    </ligand>
</feature>
<feature type="binding site" evidence="2">
    <location>
        <position position="328"/>
    </location>
    <ligand>
        <name>Cu cation</name>
        <dbReference type="ChEBI" id="CHEBI:23378"/>
        <label>B</label>
    </ligand>
</feature>
<feature type="binding site" evidence="2">
    <location>
        <position position="366"/>
    </location>
    <ligand>
        <name>Cu cation</name>
        <dbReference type="ChEBI" id="CHEBI:23378"/>
        <label>B</label>
    </ligand>
</feature>
<feature type="disulfide bond" evidence="2">
    <location>
        <begin position="94"/>
        <end position="110"/>
    </location>
</feature>
<feature type="disulfide bond" evidence="2">
    <location>
        <begin position="109"/>
        <end position="177"/>
    </location>
</feature>
<feature type="cross-link" description="2'-(S-cysteinyl)-histidine (Cys-His)" evidence="2">
    <location>
        <begin position="180"/>
        <end position="194"/>
    </location>
</feature>
<reference key="1">
    <citation type="journal article" date="1993" name="Plant Mol. Biol.">
        <title>Organisation of the tomato polyphenol oxidase gene family.</title>
        <authorList>
            <person name="Newman S.M."/>
            <person name="Eannetta N.T."/>
            <person name="Yu H."/>
            <person name="Prince J.P."/>
            <person name="de Vicente M.C."/>
            <person name="Tanksley S.D."/>
            <person name="Steffens J.C."/>
        </authorList>
    </citation>
    <scope>NUCLEOTIDE SEQUENCE [GENOMIC DNA]</scope>
    <source>
        <strain>cv. VFNT Cherry</strain>
    </source>
</reference>
<dbReference type="EC" id="1.10.3.1"/>
<dbReference type="EMBL" id="Z12836">
    <property type="protein sequence ID" value="CAA78298.1"/>
    <property type="molecule type" value="Genomic_DNA"/>
</dbReference>
<dbReference type="PIR" id="S33542">
    <property type="entry name" value="S33542"/>
</dbReference>
<dbReference type="SMR" id="Q08306"/>
<dbReference type="STRING" id="4081.Q08306"/>
<dbReference type="InParanoid" id="Q08306"/>
<dbReference type="Proteomes" id="UP000004994">
    <property type="component" value="Unplaced"/>
</dbReference>
<dbReference type="ExpressionAtlas" id="Q08306">
    <property type="expression patterns" value="baseline and differential"/>
</dbReference>
<dbReference type="GO" id="GO:0009543">
    <property type="term" value="C:chloroplast thylakoid lumen"/>
    <property type="evidence" value="ECO:0007669"/>
    <property type="project" value="UniProtKB-SubCell"/>
</dbReference>
<dbReference type="GO" id="GO:0004097">
    <property type="term" value="F:catechol oxidase activity"/>
    <property type="evidence" value="ECO:0007669"/>
    <property type="project" value="UniProtKB-EC"/>
</dbReference>
<dbReference type="GO" id="GO:0046872">
    <property type="term" value="F:metal ion binding"/>
    <property type="evidence" value="ECO:0007669"/>
    <property type="project" value="UniProtKB-KW"/>
</dbReference>
<dbReference type="GO" id="GO:0046148">
    <property type="term" value="P:pigment biosynthetic process"/>
    <property type="evidence" value="ECO:0007669"/>
    <property type="project" value="InterPro"/>
</dbReference>
<dbReference type="Gene3D" id="1.10.1280.10">
    <property type="entry name" value="Di-copper center containing domain from catechol oxidase"/>
    <property type="match status" value="1"/>
</dbReference>
<dbReference type="InterPro" id="IPR008922">
    <property type="entry name" value="Di-copper_centre_dom_sf"/>
</dbReference>
<dbReference type="InterPro" id="IPR016213">
    <property type="entry name" value="Polyphenol_oxidase"/>
</dbReference>
<dbReference type="InterPro" id="IPR022740">
    <property type="entry name" value="Polyphenol_oxidase_C"/>
</dbReference>
<dbReference type="InterPro" id="IPR022739">
    <property type="entry name" value="Polyphenol_oxidase_cen"/>
</dbReference>
<dbReference type="InterPro" id="IPR050316">
    <property type="entry name" value="Tyrosinase/Hemocyanin"/>
</dbReference>
<dbReference type="InterPro" id="IPR002227">
    <property type="entry name" value="Tyrosinase_Cu-bd"/>
</dbReference>
<dbReference type="PANTHER" id="PTHR11474:SF112">
    <property type="entry name" value="POLYPHENOL OXIDASE D, CHLOROPLASTIC"/>
    <property type="match status" value="1"/>
</dbReference>
<dbReference type="PANTHER" id="PTHR11474">
    <property type="entry name" value="TYROSINASE FAMILY MEMBER"/>
    <property type="match status" value="1"/>
</dbReference>
<dbReference type="Pfam" id="PF12142">
    <property type="entry name" value="PPO1_DWL"/>
    <property type="match status" value="1"/>
</dbReference>
<dbReference type="Pfam" id="PF12143">
    <property type="entry name" value="PPO1_KFDV"/>
    <property type="match status" value="1"/>
</dbReference>
<dbReference type="Pfam" id="PF00264">
    <property type="entry name" value="Tyrosinase"/>
    <property type="match status" value="1"/>
</dbReference>
<dbReference type="PIRSF" id="PIRSF000290">
    <property type="entry name" value="PPO_plant"/>
    <property type="match status" value="1"/>
</dbReference>
<dbReference type="PRINTS" id="PR00092">
    <property type="entry name" value="TYROSINASE"/>
</dbReference>
<dbReference type="SUPFAM" id="SSF48056">
    <property type="entry name" value="Di-copper centre-containing domain"/>
    <property type="match status" value="1"/>
</dbReference>
<dbReference type="PROSITE" id="PS00497">
    <property type="entry name" value="TYROSINASE_1"/>
    <property type="match status" value="1"/>
</dbReference>
<dbReference type="PROSITE" id="PS00498">
    <property type="entry name" value="TYROSINASE_2"/>
    <property type="match status" value="1"/>
</dbReference>
<evidence type="ECO:0000250" key="1"/>
<evidence type="ECO:0000250" key="2">
    <source>
        <dbReference type="UniProtKB" id="Q9ZP19"/>
    </source>
</evidence>
<evidence type="ECO:0000305" key="3"/>